<sequence length="305" mass="31491">MSISASLVKELRDLTGAGMMDCKAALAATEGKIEAAVDWLRAKGIAKADKKAGRTAAEGLVGVAASGNKAVVVEVNSETDFVARNDAFQELVRKIAQAALSTDGSSEAVANANVDGKTVTEAAKDAVATIGENISFRRSAALSVPQGVVATYIHNGVADGLGKLGVLVAIETAGDAEAAQAFGRQVAMHVAAVNPLALTSADVNPEAAEREKAIFIDQARQSGKPDNIIEKMVEGRMRKFYEEVVLLSQAFVINPDLTVEAALKDAEKAIGAPAKITGFARIALGEGIEKEESDFAAEVAAAAKG</sequence>
<dbReference type="EMBL" id="CP001488">
    <property type="protein sequence ID" value="ACO00937.1"/>
    <property type="molecule type" value="Genomic_DNA"/>
</dbReference>
<dbReference type="RefSeq" id="WP_002964288.1">
    <property type="nucleotide sequence ID" value="NC_012441.1"/>
</dbReference>
<dbReference type="SMR" id="C0RJC9"/>
<dbReference type="GeneID" id="93016505"/>
<dbReference type="KEGG" id="bmi:BMEA_A1204"/>
<dbReference type="HOGENOM" id="CLU_047155_2_0_5"/>
<dbReference type="Proteomes" id="UP000001748">
    <property type="component" value="Chromosome I"/>
</dbReference>
<dbReference type="GO" id="GO:0005737">
    <property type="term" value="C:cytoplasm"/>
    <property type="evidence" value="ECO:0007669"/>
    <property type="project" value="UniProtKB-SubCell"/>
</dbReference>
<dbReference type="GO" id="GO:0003746">
    <property type="term" value="F:translation elongation factor activity"/>
    <property type="evidence" value="ECO:0007669"/>
    <property type="project" value="UniProtKB-UniRule"/>
</dbReference>
<dbReference type="CDD" id="cd14275">
    <property type="entry name" value="UBA_EF-Ts"/>
    <property type="match status" value="1"/>
</dbReference>
<dbReference type="FunFam" id="1.10.286.20:FF:000001">
    <property type="entry name" value="Elongation factor Ts"/>
    <property type="match status" value="1"/>
</dbReference>
<dbReference type="FunFam" id="1.10.8.10:FF:000001">
    <property type="entry name" value="Elongation factor Ts"/>
    <property type="match status" value="1"/>
</dbReference>
<dbReference type="Gene3D" id="1.10.286.20">
    <property type="match status" value="1"/>
</dbReference>
<dbReference type="Gene3D" id="1.10.8.10">
    <property type="entry name" value="DNA helicase RuvA subunit, C-terminal domain"/>
    <property type="match status" value="1"/>
</dbReference>
<dbReference type="Gene3D" id="3.30.479.20">
    <property type="entry name" value="Elongation factor Ts, dimerisation domain"/>
    <property type="match status" value="2"/>
</dbReference>
<dbReference type="HAMAP" id="MF_00050">
    <property type="entry name" value="EF_Ts"/>
    <property type="match status" value="1"/>
</dbReference>
<dbReference type="InterPro" id="IPR036402">
    <property type="entry name" value="EF-Ts_dimer_sf"/>
</dbReference>
<dbReference type="InterPro" id="IPR001816">
    <property type="entry name" value="Transl_elong_EFTs/EF1B"/>
</dbReference>
<dbReference type="InterPro" id="IPR014039">
    <property type="entry name" value="Transl_elong_EFTs/EF1B_dimer"/>
</dbReference>
<dbReference type="InterPro" id="IPR018101">
    <property type="entry name" value="Transl_elong_Ts_CS"/>
</dbReference>
<dbReference type="InterPro" id="IPR009060">
    <property type="entry name" value="UBA-like_sf"/>
</dbReference>
<dbReference type="NCBIfam" id="TIGR00116">
    <property type="entry name" value="tsf"/>
    <property type="match status" value="1"/>
</dbReference>
<dbReference type="PANTHER" id="PTHR11741">
    <property type="entry name" value="ELONGATION FACTOR TS"/>
    <property type="match status" value="1"/>
</dbReference>
<dbReference type="PANTHER" id="PTHR11741:SF0">
    <property type="entry name" value="ELONGATION FACTOR TS, MITOCHONDRIAL"/>
    <property type="match status" value="1"/>
</dbReference>
<dbReference type="Pfam" id="PF00889">
    <property type="entry name" value="EF_TS"/>
    <property type="match status" value="1"/>
</dbReference>
<dbReference type="SUPFAM" id="SSF54713">
    <property type="entry name" value="Elongation factor Ts (EF-Ts), dimerisation domain"/>
    <property type="match status" value="2"/>
</dbReference>
<dbReference type="SUPFAM" id="SSF46934">
    <property type="entry name" value="UBA-like"/>
    <property type="match status" value="1"/>
</dbReference>
<dbReference type="PROSITE" id="PS01127">
    <property type="entry name" value="EF_TS_2"/>
    <property type="match status" value="1"/>
</dbReference>
<protein>
    <recommendedName>
        <fullName evidence="1">Elongation factor Ts</fullName>
        <shortName evidence="1">EF-Ts</shortName>
    </recommendedName>
</protein>
<evidence type="ECO:0000255" key="1">
    <source>
        <dbReference type="HAMAP-Rule" id="MF_00050"/>
    </source>
</evidence>
<reference key="1">
    <citation type="submission" date="2009-03" db="EMBL/GenBank/DDBJ databases">
        <title>Brucella melitensis ATCC 23457 whole genome shotgun sequencing project.</title>
        <authorList>
            <person name="Setubal J.C."/>
            <person name="Boyle S."/>
            <person name="Crasta O.R."/>
            <person name="Gillespie J.J."/>
            <person name="Kenyon R.W."/>
            <person name="Lu J."/>
            <person name="Mane S."/>
            <person name="Nagrani S."/>
            <person name="Shallom J.M."/>
            <person name="Shallom S."/>
            <person name="Shukla M."/>
            <person name="Snyder E.E."/>
            <person name="Sobral B.W."/>
            <person name="Wattam A.R."/>
            <person name="Will R."/>
            <person name="Williams K."/>
            <person name="Yoo H."/>
            <person name="Munk C."/>
            <person name="Tapia R."/>
            <person name="Han C."/>
            <person name="Detter J.C."/>
            <person name="Bruce D."/>
            <person name="Brettin T.S."/>
        </authorList>
    </citation>
    <scope>NUCLEOTIDE SEQUENCE [LARGE SCALE GENOMIC DNA]</scope>
    <source>
        <strain>ATCC 23457</strain>
    </source>
</reference>
<accession>C0RJC9</accession>
<keyword id="KW-0963">Cytoplasm</keyword>
<keyword id="KW-0251">Elongation factor</keyword>
<keyword id="KW-0648">Protein biosynthesis</keyword>
<comment type="function">
    <text evidence="1">Associates with the EF-Tu.GDP complex and induces the exchange of GDP to GTP. It remains bound to the aminoacyl-tRNA.EF-Tu.GTP complex up to the GTP hydrolysis stage on the ribosome.</text>
</comment>
<comment type="subcellular location">
    <subcellularLocation>
        <location evidence="1">Cytoplasm</location>
    </subcellularLocation>
</comment>
<comment type="similarity">
    <text evidence="1">Belongs to the EF-Ts family.</text>
</comment>
<name>EFTS_BRUMB</name>
<organism>
    <name type="scientific">Brucella melitensis biotype 2 (strain ATCC 23457)</name>
    <dbReference type="NCBI Taxonomy" id="546272"/>
    <lineage>
        <taxon>Bacteria</taxon>
        <taxon>Pseudomonadati</taxon>
        <taxon>Pseudomonadota</taxon>
        <taxon>Alphaproteobacteria</taxon>
        <taxon>Hyphomicrobiales</taxon>
        <taxon>Brucellaceae</taxon>
        <taxon>Brucella/Ochrobactrum group</taxon>
        <taxon>Brucella</taxon>
    </lineage>
</organism>
<gene>
    <name evidence="1" type="primary">tsf</name>
    <name type="ordered locus">BMEA_A1204</name>
</gene>
<proteinExistence type="inferred from homology"/>
<feature type="chain" id="PRO_1000189865" description="Elongation factor Ts">
    <location>
        <begin position="1"/>
        <end position="305"/>
    </location>
</feature>
<feature type="region of interest" description="Involved in Mg(2+) ion dislocation from EF-Tu" evidence="1">
    <location>
        <begin position="79"/>
        <end position="82"/>
    </location>
</feature>